<sequence length="348" mass="37409">MIKIAIDAMGGDYAPNAVIEGVEQARDLFEDTVFLLYGQRDVINAQLKNRDRIQIINADEVITMEDEPVRAVRRKKHSSIVMAAQAVKDGQADAFFSAGNSGAVLAAGLFIVGRIKGIDRPGLVTVLPVVRNANQSNFVMMDIGANADSKPLNLQQYGVLGTYYAERMMQAKHPRVALLNNGTEDDKGNKVHKAAFELLSQTDGINFVGNVESRDLLNGVADVVVTDGFTGNAVLKSIEGTARSMLGLVKDAVYNTGISGKLGGLLLKNGFNEIRSQMDYSQYGGAVLLGLKAPVVKTHGSSKAPTIVNTIRQIRQMVSTDIVPGVAEYFANQQANQQASVDIPAEND</sequence>
<keyword id="KW-0963">Cytoplasm</keyword>
<keyword id="KW-0444">Lipid biosynthesis</keyword>
<keyword id="KW-0443">Lipid metabolism</keyword>
<keyword id="KW-0594">Phospholipid biosynthesis</keyword>
<keyword id="KW-1208">Phospholipid metabolism</keyword>
<keyword id="KW-1185">Reference proteome</keyword>
<keyword id="KW-0808">Transferase</keyword>
<dbReference type="EC" id="2.3.1.274" evidence="1"/>
<dbReference type="EMBL" id="AL935263">
    <property type="protein sequence ID" value="CCC78940.1"/>
    <property type="molecule type" value="Genomic_DNA"/>
</dbReference>
<dbReference type="RefSeq" id="WP_003644323.1">
    <property type="nucleotide sequence ID" value="NC_004567.2"/>
</dbReference>
<dbReference type="RefSeq" id="YP_004889454.1">
    <property type="nucleotide sequence ID" value="NC_004567.2"/>
</dbReference>
<dbReference type="SMR" id="Q88WK2"/>
<dbReference type="STRING" id="220668.lp_1628"/>
<dbReference type="EnsemblBacteria" id="CCC78940">
    <property type="protein sequence ID" value="CCC78940"/>
    <property type="gene ID" value="lp_1628"/>
</dbReference>
<dbReference type="GeneID" id="77218043"/>
<dbReference type="KEGG" id="lpl:lp_1628"/>
<dbReference type="PATRIC" id="fig|220668.9.peg.1376"/>
<dbReference type="eggNOG" id="COG0416">
    <property type="taxonomic scope" value="Bacteria"/>
</dbReference>
<dbReference type="HOGENOM" id="CLU_039379_1_1_9"/>
<dbReference type="OrthoDB" id="9806408at2"/>
<dbReference type="PhylomeDB" id="Q88WK2"/>
<dbReference type="UniPathway" id="UPA00085"/>
<dbReference type="Proteomes" id="UP000000432">
    <property type="component" value="Chromosome"/>
</dbReference>
<dbReference type="GO" id="GO:0005737">
    <property type="term" value="C:cytoplasm"/>
    <property type="evidence" value="ECO:0007669"/>
    <property type="project" value="UniProtKB-SubCell"/>
</dbReference>
<dbReference type="GO" id="GO:0043811">
    <property type="term" value="F:phosphate:acyl-[acyl carrier protein] acyltransferase activity"/>
    <property type="evidence" value="ECO:0007669"/>
    <property type="project" value="UniProtKB-UniRule"/>
</dbReference>
<dbReference type="GO" id="GO:0006633">
    <property type="term" value="P:fatty acid biosynthetic process"/>
    <property type="evidence" value="ECO:0007669"/>
    <property type="project" value="UniProtKB-UniRule"/>
</dbReference>
<dbReference type="GO" id="GO:0008654">
    <property type="term" value="P:phospholipid biosynthetic process"/>
    <property type="evidence" value="ECO:0007669"/>
    <property type="project" value="UniProtKB-KW"/>
</dbReference>
<dbReference type="Gene3D" id="3.40.718.10">
    <property type="entry name" value="Isopropylmalate Dehydrogenase"/>
    <property type="match status" value="1"/>
</dbReference>
<dbReference type="HAMAP" id="MF_00019">
    <property type="entry name" value="PlsX"/>
    <property type="match status" value="1"/>
</dbReference>
<dbReference type="InterPro" id="IPR003664">
    <property type="entry name" value="FA_synthesis"/>
</dbReference>
<dbReference type="InterPro" id="IPR012281">
    <property type="entry name" value="Phospholipid_synth_PlsX-like"/>
</dbReference>
<dbReference type="NCBIfam" id="TIGR00182">
    <property type="entry name" value="plsX"/>
    <property type="match status" value="1"/>
</dbReference>
<dbReference type="PANTHER" id="PTHR30100">
    <property type="entry name" value="FATTY ACID/PHOSPHOLIPID SYNTHESIS PROTEIN PLSX"/>
    <property type="match status" value="1"/>
</dbReference>
<dbReference type="PANTHER" id="PTHR30100:SF1">
    <property type="entry name" value="PHOSPHATE ACYLTRANSFERASE"/>
    <property type="match status" value="1"/>
</dbReference>
<dbReference type="Pfam" id="PF02504">
    <property type="entry name" value="FA_synthesis"/>
    <property type="match status" value="1"/>
</dbReference>
<dbReference type="PIRSF" id="PIRSF002465">
    <property type="entry name" value="Phsphlp_syn_PlsX"/>
    <property type="match status" value="1"/>
</dbReference>
<dbReference type="SUPFAM" id="SSF53659">
    <property type="entry name" value="Isocitrate/Isopropylmalate dehydrogenase-like"/>
    <property type="match status" value="1"/>
</dbReference>
<protein>
    <recommendedName>
        <fullName evidence="1">Phosphate acyltransferase</fullName>
        <ecNumber evidence="1">2.3.1.274</ecNumber>
    </recommendedName>
    <alternativeName>
        <fullName evidence="1">Acyl-ACP phosphotransacylase</fullName>
    </alternativeName>
    <alternativeName>
        <fullName evidence="1">Acyl-[acyl-carrier-protein]--phosphate acyltransferase</fullName>
    </alternativeName>
    <alternativeName>
        <fullName evidence="1">Phosphate-acyl-ACP acyltransferase</fullName>
    </alternativeName>
</protein>
<name>PLSX_LACPL</name>
<proteinExistence type="inferred from homology"/>
<comment type="function">
    <text evidence="1">Catalyzes the reversible formation of acyl-phosphate (acyl-PO(4)) from acyl-[acyl-carrier-protein] (acyl-ACP). This enzyme utilizes acyl-ACP as fatty acyl donor, but not acyl-CoA.</text>
</comment>
<comment type="catalytic activity">
    <reaction evidence="1">
        <text>a fatty acyl-[ACP] + phosphate = an acyl phosphate + holo-[ACP]</text>
        <dbReference type="Rhea" id="RHEA:42292"/>
        <dbReference type="Rhea" id="RHEA-COMP:9685"/>
        <dbReference type="Rhea" id="RHEA-COMP:14125"/>
        <dbReference type="ChEBI" id="CHEBI:43474"/>
        <dbReference type="ChEBI" id="CHEBI:59918"/>
        <dbReference type="ChEBI" id="CHEBI:64479"/>
        <dbReference type="ChEBI" id="CHEBI:138651"/>
        <dbReference type="EC" id="2.3.1.274"/>
    </reaction>
</comment>
<comment type="pathway">
    <text evidence="1">Lipid metabolism; phospholipid metabolism.</text>
</comment>
<comment type="subunit">
    <text evidence="1">Homodimer. Probably interacts with PlsY.</text>
</comment>
<comment type="subcellular location">
    <subcellularLocation>
        <location evidence="1">Cytoplasm</location>
    </subcellularLocation>
    <text evidence="1">Associated with the membrane possibly through PlsY.</text>
</comment>
<comment type="similarity">
    <text evidence="1">Belongs to the PlsX family.</text>
</comment>
<accession>Q88WK2</accession>
<accession>F9UP01</accession>
<feature type="chain" id="PRO_0000189892" description="Phosphate acyltransferase">
    <location>
        <begin position="1"/>
        <end position="348"/>
    </location>
</feature>
<evidence type="ECO:0000255" key="1">
    <source>
        <dbReference type="HAMAP-Rule" id="MF_00019"/>
    </source>
</evidence>
<reference key="1">
    <citation type="journal article" date="2003" name="Proc. Natl. Acad. Sci. U.S.A.">
        <title>Complete genome sequence of Lactobacillus plantarum WCFS1.</title>
        <authorList>
            <person name="Kleerebezem M."/>
            <person name="Boekhorst J."/>
            <person name="van Kranenburg R."/>
            <person name="Molenaar D."/>
            <person name="Kuipers O.P."/>
            <person name="Leer R."/>
            <person name="Tarchini R."/>
            <person name="Peters S.A."/>
            <person name="Sandbrink H.M."/>
            <person name="Fiers M.W.E.J."/>
            <person name="Stiekema W."/>
            <person name="Klein Lankhorst R.M."/>
            <person name="Bron P.A."/>
            <person name="Hoffer S.M."/>
            <person name="Nierop Groot M.N."/>
            <person name="Kerkhoven R."/>
            <person name="De Vries M."/>
            <person name="Ursing B."/>
            <person name="De Vos W.M."/>
            <person name="Siezen R.J."/>
        </authorList>
    </citation>
    <scope>NUCLEOTIDE SEQUENCE [LARGE SCALE GENOMIC DNA]</scope>
    <source>
        <strain>ATCC BAA-793 / NCIMB 8826 / WCFS1</strain>
    </source>
</reference>
<reference key="2">
    <citation type="journal article" date="2012" name="J. Bacteriol.">
        <title>Complete resequencing and reannotation of the Lactobacillus plantarum WCFS1 genome.</title>
        <authorList>
            <person name="Siezen R.J."/>
            <person name="Francke C."/>
            <person name="Renckens B."/>
            <person name="Boekhorst J."/>
            <person name="Wels M."/>
            <person name="Kleerebezem M."/>
            <person name="van Hijum S.A."/>
        </authorList>
    </citation>
    <scope>NUCLEOTIDE SEQUENCE [LARGE SCALE GENOMIC DNA]</scope>
    <scope>GENOME REANNOTATION</scope>
    <source>
        <strain>ATCC BAA-793 / NCIMB 8826 / WCFS1</strain>
    </source>
</reference>
<gene>
    <name evidence="1" type="primary">plsX</name>
    <name type="ordered locus">lp_1628</name>
</gene>
<organism>
    <name type="scientific">Lactiplantibacillus plantarum (strain ATCC BAA-793 / NCIMB 8826 / WCFS1)</name>
    <name type="common">Lactobacillus plantarum</name>
    <dbReference type="NCBI Taxonomy" id="220668"/>
    <lineage>
        <taxon>Bacteria</taxon>
        <taxon>Bacillati</taxon>
        <taxon>Bacillota</taxon>
        <taxon>Bacilli</taxon>
        <taxon>Lactobacillales</taxon>
        <taxon>Lactobacillaceae</taxon>
        <taxon>Lactiplantibacillus</taxon>
    </lineage>
</organism>